<name>ACPS_MYCGA</name>
<proteinExistence type="inferred from homology"/>
<feature type="chain" id="PRO_0000175667" description="Holo-[acyl-carrier-protein] synthase">
    <location>
        <begin position="1"/>
        <end position="111"/>
    </location>
</feature>
<feature type="binding site" evidence="1">
    <location>
        <position position="8"/>
    </location>
    <ligand>
        <name>Mg(2+)</name>
        <dbReference type="ChEBI" id="CHEBI:18420"/>
    </ligand>
</feature>
<feature type="binding site" evidence="1">
    <location>
        <position position="57"/>
    </location>
    <ligand>
        <name>Mg(2+)</name>
        <dbReference type="ChEBI" id="CHEBI:18420"/>
    </ligand>
</feature>
<organism>
    <name type="scientific">Mycoplasmoides gallisepticum (strain R(low / passage 15 / clone 2))</name>
    <name type="common">Mycoplasma gallisepticum</name>
    <dbReference type="NCBI Taxonomy" id="710127"/>
    <lineage>
        <taxon>Bacteria</taxon>
        <taxon>Bacillati</taxon>
        <taxon>Mycoplasmatota</taxon>
        <taxon>Mycoplasmoidales</taxon>
        <taxon>Mycoplasmoidaceae</taxon>
        <taxon>Mycoplasmoides</taxon>
    </lineage>
</organism>
<dbReference type="EC" id="2.7.8.7" evidence="1"/>
<dbReference type="EMBL" id="AE015450">
    <property type="protein sequence ID" value="AAP56755.2"/>
    <property type="molecule type" value="Genomic_DNA"/>
</dbReference>
<dbReference type="RefSeq" id="WP_011113651.1">
    <property type="nucleotide sequence ID" value="NC_004829.2"/>
</dbReference>
<dbReference type="SMR" id="Q7NB74"/>
<dbReference type="KEGG" id="mga:MGA_0041"/>
<dbReference type="HOGENOM" id="CLU_089696_1_1_14"/>
<dbReference type="OrthoDB" id="389495at2"/>
<dbReference type="Proteomes" id="UP000001418">
    <property type="component" value="Chromosome"/>
</dbReference>
<dbReference type="GO" id="GO:0005737">
    <property type="term" value="C:cytoplasm"/>
    <property type="evidence" value="ECO:0007669"/>
    <property type="project" value="UniProtKB-SubCell"/>
</dbReference>
<dbReference type="GO" id="GO:0008897">
    <property type="term" value="F:holo-[acyl-carrier-protein] synthase activity"/>
    <property type="evidence" value="ECO:0007669"/>
    <property type="project" value="UniProtKB-UniRule"/>
</dbReference>
<dbReference type="GO" id="GO:0000287">
    <property type="term" value="F:magnesium ion binding"/>
    <property type="evidence" value="ECO:0007669"/>
    <property type="project" value="UniProtKB-UniRule"/>
</dbReference>
<dbReference type="GO" id="GO:0006633">
    <property type="term" value="P:fatty acid biosynthetic process"/>
    <property type="evidence" value="ECO:0007669"/>
    <property type="project" value="UniProtKB-UniRule"/>
</dbReference>
<dbReference type="Gene3D" id="3.90.470.20">
    <property type="entry name" value="4'-phosphopantetheinyl transferase domain"/>
    <property type="match status" value="1"/>
</dbReference>
<dbReference type="HAMAP" id="MF_00101">
    <property type="entry name" value="AcpS"/>
    <property type="match status" value="1"/>
</dbReference>
<dbReference type="InterPro" id="IPR008278">
    <property type="entry name" value="4-PPantetheinyl_Trfase_dom"/>
</dbReference>
<dbReference type="InterPro" id="IPR037143">
    <property type="entry name" value="4-PPantetheinyl_Trfase_dom_sf"/>
</dbReference>
<dbReference type="InterPro" id="IPR002582">
    <property type="entry name" value="ACPS"/>
</dbReference>
<dbReference type="InterPro" id="IPR004568">
    <property type="entry name" value="Ppantetheine-prot_Trfase_dom"/>
</dbReference>
<dbReference type="NCBIfam" id="TIGR00556">
    <property type="entry name" value="pantethn_trn"/>
    <property type="match status" value="1"/>
</dbReference>
<dbReference type="NCBIfam" id="NF000835">
    <property type="entry name" value="PRK00070.4-1"/>
    <property type="match status" value="1"/>
</dbReference>
<dbReference type="Pfam" id="PF01648">
    <property type="entry name" value="ACPS"/>
    <property type="match status" value="1"/>
</dbReference>
<dbReference type="SUPFAM" id="SSF56214">
    <property type="entry name" value="4'-phosphopantetheinyl transferase"/>
    <property type="match status" value="1"/>
</dbReference>
<gene>
    <name evidence="1" type="primary">acpS</name>
    <name type="ordered locus">MYCGA4050</name>
    <name type="ORF">MGA_0041</name>
</gene>
<keyword id="KW-0963">Cytoplasm</keyword>
<keyword id="KW-0275">Fatty acid biosynthesis</keyword>
<keyword id="KW-0276">Fatty acid metabolism</keyword>
<keyword id="KW-0444">Lipid biosynthesis</keyword>
<keyword id="KW-0443">Lipid metabolism</keyword>
<keyword id="KW-0460">Magnesium</keyword>
<keyword id="KW-0479">Metal-binding</keyword>
<keyword id="KW-1185">Reference proteome</keyword>
<keyword id="KW-0808">Transferase</keyword>
<accession>Q7NB74</accession>
<comment type="function">
    <text evidence="1">Transfers the 4'-phosphopantetheine moiety from coenzyme A to a Ser of acyl-carrier-protein.</text>
</comment>
<comment type="catalytic activity">
    <reaction evidence="1">
        <text>apo-[ACP] + CoA = holo-[ACP] + adenosine 3',5'-bisphosphate + H(+)</text>
        <dbReference type="Rhea" id="RHEA:12068"/>
        <dbReference type="Rhea" id="RHEA-COMP:9685"/>
        <dbReference type="Rhea" id="RHEA-COMP:9690"/>
        <dbReference type="ChEBI" id="CHEBI:15378"/>
        <dbReference type="ChEBI" id="CHEBI:29999"/>
        <dbReference type="ChEBI" id="CHEBI:57287"/>
        <dbReference type="ChEBI" id="CHEBI:58343"/>
        <dbReference type="ChEBI" id="CHEBI:64479"/>
        <dbReference type="EC" id="2.7.8.7"/>
    </reaction>
</comment>
<comment type="cofactor">
    <cofactor evidence="1">
        <name>Mg(2+)</name>
        <dbReference type="ChEBI" id="CHEBI:18420"/>
    </cofactor>
</comment>
<comment type="subcellular location">
    <subcellularLocation>
        <location evidence="1">Cytoplasm</location>
    </subcellularLocation>
</comment>
<comment type="similarity">
    <text evidence="1">Belongs to the P-Pant transferase superfamily. AcpS family.</text>
</comment>
<protein>
    <recommendedName>
        <fullName evidence="1">Holo-[acyl-carrier-protein] synthase</fullName>
        <shortName evidence="1">Holo-ACP synthase</shortName>
        <ecNumber evidence="1">2.7.8.7</ecNumber>
    </recommendedName>
    <alternativeName>
        <fullName evidence="1">4'-phosphopantetheinyl transferase AcpS</fullName>
    </alternativeName>
</protein>
<sequence length="111" mass="12842">MIIGVGIDVVSIDRFQAKKSDEFIKKLLTEHEQNKYKTVIGESNQNIFLAIRWSLKEAIFKALKTWDEFTQLEIRKIHGAYECSLNEKIKLHLSISHEGQRLVAMAVAERI</sequence>
<evidence type="ECO:0000255" key="1">
    <source>
        <dbReference type="HAMAP-Rule" id="MF_00101"/>
    </source>
</evidence>
<reference key="1">
    <citation type="journal article" date="2003" name="Microbiology">
        <title>The complete genome sequence of the avian pathogen Mycoplasma gallisepticum strain R(low).</title>
        <authorList>
            <person name="Papazisi L."/>
            <person name="Gorton T.S."/>
            <person name="Kutish G."/>
            <person name="Markham P.F."/>
            <person name="Browning G.F."/>
            <person name="Nguyen D.K."/>
            <person name="Swartzell S."/>
            <person name="Madan A."/>
            <person name="Mahairas G."/>
            <person name="Geary S.J."/>
        </authorList>
    </citation>
    <scope>NUCLEOTIDE SEQUENCE [LARGE SCALE GENOMIC DNA]</scope>
    <source>
        <strain>R(low / passage 15 / clone 2)</strain>
    </source>
</reference>